<organism>
    <name type="scientific">Histophilus somni (strain 129Pt)</name>
    <name type="common">Haemophilus somnus</name>
    <dbReference type="NCBI Taxonomy" id="205914"/>
    <lineage>
        <taxon>Bacteria</taxon>
        <taxon>Pseudomonadati</taxon>
        <taxon>Pseudomonadota</taxon>
        <taxon>Gammaproteobacteria</taxon>
        <taxon>Pasteurellales</taxon>
        <taxon>Pasteurellaceae</taxon>
        <taxon>Histophilus</taxon>
    </lineage>
</organism>
<sequence length="214" mass="23733">MKIILLGAPGAGKGTQAQFITNKFGIPQISTGDMLRAAIKAGSELGQKAKILMDMGQLVPDDLIISLVKERVAQEDCEKGFLLDGFPRTIPQADALKSVGISIDYVLEFDVPDEVIVERMSGRRVHPASGRTYHIVYNPPKVEDKDDITGEDLILRADDKPETVLDRLKIYHNTTKLLVDYYQAEAAQGNTKYFRLDGTQKVEEVSQELDKILS</sequence>
<proteinExistence type="inferred from homology"/>
<dbReference type="EC" id="2.7.4.3" evidence="1"/>
<dbReference type="EMBL" id="CP000436">
    <property type="protein sequence ID" value="ABI24925.1"/>
    <property type="molecule type" value="Genomic_DNA"/>
</dbReference>
<dbReference type="SMR" id="Q0I2Y5"/>
<dbReference type="KEGG" id="hso:HS_0648"/>
<dbReference type="eggNOG" id="COG0563">
    <property type="taxonomic scope" value="Bacteria"/>
</dbReference>
<dbReference type="HOGENOM" id="CLU_032354_1_2_6"/>
<dbReference type="UniPathway" id="UPA00588">
    <property type="reaction ID" value="UER00649"/>
</dbReference>
<dbReference type="GO" id="GO:0005737">
    <property type="term" value="C:cytoplasm"/>
    <property type="evidence" value="ECO:0007669"/>
    <property type="project" value="UniProtKB-SubCell"/>
</dbReference>
<dbReference type="GO" id="GO:0004017">
    <property type="term" value="F:adenylate kinase activity"/>
    <property type="evidence" value="ECO:0007669"/>
    <property type="project" value="UniProtKB-UniRule"/>
</dbReference>
<dbReference type="GO" id="GO:0005524">
    <property type="term" value="F:ATP binding"/>
    <property type="evidence" value="ECO:0007669"/>
    <property type="project" value="UniProtKB-UniRule"/>
</dbReference>
<dbReference type="GO" id="GO:0044209">
    <property type="term" value="P:AMP salvage"/>
    <property type="evidence" value="ECO:0007669"/>
    <property type="project" value="UniProtKB-UniRule"/>
</dbReference>
<dbReference type="CDD" id="cd01428">
    <property type="entry name" value="ADK"/>
    <property type="match status" value="1"/>
</dbReference>
<dbReference type="FunFam" id="3.40.50.300:FF:000106">
    <property type="entry name" value="Adenylate kinase mitochondrial"/>
    <property type="match status" value="1"/>
</dbReference>
<dbReference type="Gene3D" id="3.40.50.300">
    <property type="entry name" value="P-loop containing nucleotide triphosphate hydrolases"/>
    <property type="match status" value="1"/>
</dbReference>
<dbReference type="HAMAP" id="MF_00235">
    <property type="entry name" value="Adenylate_kinase_Adk"/>
    <property type="match status" value="1"/>
</dbReference>
<dbReference type="InterPro" id="IPR006259">
    <property type="entry name" value="Adenyl_kin_sub"/>
</dbReference>
<dbReference type="InterPro" id="IPR000850">
    <property type="entry name" value="Adenylat/UMP-CMP_kin"/>
</dbReference>
<dbReference type="InterPro" id="IPR033690">
    <property type="entry name" value="Adenylat_kinase_CS"/>
</dbReference>
<dbReference type="InterPro" id="IPR007862">
    <property type="entry name" value="Adenylate_kinase_lid-dom"/>
</dbReference>
<dbReference type="InterPro" id="IPR027417">
    <property type="entry name" value="P-loop_NTPase"/>
</dbReference>
<dbReference type="NCBIfam" id="TIGR01351">
    <property type="entry name" value="adk"/>
    <property type="match status" value="1"/>
</dbReference>
<dbReference type="NCBIfam" id="NF001379">
    <property type="entry name" value="PRK00279.1-1"/>
    <property type="match status" value="1"/>
</dbReference>
<dbReference type="NCBIfam" id="NF001380">
    <property type="entry name" value="PRK00279.1-2"/>
    <property type="match status" value="1"/>
</dbReference>
<dbReference type="NCBIfam" id="NF001381">
    <property type="entry name" value="PRK00279.1-3"/>
    <property type="match status" value="1"/>
</dbReference>
<dbReference type="PANTHER" id="PTHR23359">
    <property type="entry name" value="NUCLEOTIDE KINASE"/>
    <property type="match status" value="1"/>
</dbReference>
<dbReference type="Pfam" id="PF00406">
    <property type="entry name" value="ADK"/>
    <property type="match status" value="1"/>
</dbReference>
<dbReference type="Pfam" id="PF05191">
    <property type="entry name" value="ADK_lid"/>
    <property type="match status" value="1"/>
</dbReference>
<dbReference type="PRINTS" id="PR00094">
    <property type="entry name" value="ADENYLTKNASE"/>
</dbReference>
<dbReference type="SUPFAM" id="SSF52540">
    <property type="entry name" value="P-loop containing nucleoside triphosphate hydrolases"/>
    <property type="match status" value="1"/>
</dbReference>
<dbReference type="PROSITE" id="PS00113">
    <property type="entry name" value="ADENYLATE_KINASE"/>
    <property type="match status" value="1"/>
</dbReference>
<evidence type="ECO:0000255" key="1">
    <source>
        <dbReference type="HAMAP-Rule" id="MF_00235"/>
    </source>
</evidence>
<feature type="chain" id="PRO_1000058837" description="Adenylate kinase">
    <location>
        <begin position="1"/>
        <end position="214"/>
    </location>
</feature>
<feature type="region of interest" description="NMP" evidence="1">
    <location>
        <begin position="30"/>
        <end position="59"/>
    </location>
</feature>
<feature type="region of interest" description="LID" evidence="1">
    <location>
        <begin position="122"/>
        <end position="159"/>
    </location>
</feature>
<feature type="binding site" evidence="1">
    <location>
        <begin position="10"/>
        <end position="15"/>
    </location>
    <ligand>
        <name>ATP</name>
        <dbReference type="ChEBI" id="CHEBI:30616"/>
    </ligand>
</feature>
<feature type="binding site" evidence="1">
    <location>
        <position position="31"/>
    </location>
    <ligand>
        <name>AMP</name>
        <dbReference type="ChEBI" id="CHEBI:456215"/>
    </ligand>
</feature>
<feature type="binding site" evidence="1">
    <location>
        <position position="36"/>
    </location>
    <ligand>
        <name>AMP</name>
        <dbReference type="ChEBI" id="CHEBI:456215"/>
    </ligand>
</feature>
<feature type="binding site" evidence="1">
    <location>
        <begin position="57"/>
        <end position="59"/>
    </location>
    <ligand>
        <name>AMP</name>
        <dbReference type="ChEBI" id="CHEBI:456215"/>
    </ligand>
</feature>
<feature type="binding site" evidence="1">
    <location>
        <begin position="85"/>
        <end position="88"/>
    </location>
    <ligand>
        <name>AMP</name>
        <dbReference type="ChEBI" id="CHEBI:456215"/>
    </ligand>
</feature>
<feature type="binding site" evidence="1">
    <location>
        <position position="92"/>
    </location>
    <ligand>
        <name>AMP</name>
        <dbReference type="ChEBI" id="CHEBI:456215"/>
    </ligand>
</feature>
<feature type="binding site" evidence="1">
    <location>
        <position position="123"/>
    </location>
    <ligand>
        <name>ATP</name>
        <dbReference type="ChEBI" id="CHEBI:30616"/>
    </ligand>
</feature>
<feature type="binding site" evidence="1">
    <location>
        <begin position="132"/>
        <end position="133"/>
    </location>
    <ligand>
        <name>ATP</name>
        <dbReference type="ChEBI" id="CHEBI:30616"/>
    </ligand>
</feature>
<feature type="binding site" evidence="1">
    <location>
        <position position="156"/>
    </location>
    <ligand>
        <name>AMP</name>
        <dbReference type="ChEBI" id="CHEBI:456215"/>
    </ligand>
</feature>
<feature type="binding site" evidence="1">
    <location>
        <position position="167"/>
    </location>
    <ligand>
        <name>AMP</name>
        <dbReference type="ChEBI" id="CHEBI:456215"/>
    </ligand>
</feature>
<feature type="binding site" evidence="1">
    <location>
        <position position="200"/>
    </location>
    <ligand>
        <name>ATP</name>
        <dbReference type="ChEBI" id="CHEBI:30616"/>
    </ligand>
</feature>
<name>KAD_HISS1</name>
<accession>Q0I2Y5</accession>
<protein>
    <recommendedName>
        <fullName evidence="1">Adenylate kinase</fullName>
        <shortName evidence="1">AK</shortName>
        <ecNumber evidence="1">2.7.4.3</ecNumber>
    </recommendedName>
    <alternativeName>
        <fullName evidence="1">ATP-AMP transphosphorylase</fullName>
    </alternativeName>
    <alternativeName>
        <fullName evidence="1">ATP:AMP phosphotransferase</fullName>
    </alternativeName>
    <alternativeName>
        <fullName evidence="1">Adenylate monophosphate kinase</fullName>
    </alternativeName>
</protein>
<comment type="function">
    <text evidence="1">Catalyzes the reversible transfer of the terminal phosphate group between ATP and AMP. Plays an important role in cellular energy homeostasis and in adenine nucleotide metabolism.</text>
</comment>
<comment type="catalytic activity">
    <reaction evidence="1">
        <text>AMP + ATP = 2 ADP</text>
        <dbReference type="Rhea" id="RHEA:12973"/>
        <dbReference type="ChEBI" id="CHEBI:30616"/>
        <dbReference type="ChEBI" id="CHEBI:456215"/>
        <dbReference type="ChEBI" id="CHEBI:456216"/>
        <dbReference type="EC" id="2.7.4.3"/>
    </reaction>
</comment>
<comment type="pathway">
    <text evidence="1">Purine metabolism; AMP biosynthesis via salvage pathway; AMP from ADP: step 1/1.</text>
</comment>
<comment type="subunit">
    <text evidence="1">Monomer.</text>
</comment>
<comment type="subcellular location">
    <subcellularLocation>
        <location evidence="1">Cytoplasm</location>
    </subcellularLocation>
</comment>
<comment type="domain">
    <text evidence="1">Consists of three domains, a large central CORE domain and two small peripheral domains, NMPbind and LID, which undergo movements during catalysis. The LID domain closes over the site of phosphoryl transfer upon ATP binding. Assembling and dissambling the active center during each catalytic cycle provides an effective means to prevent ATP hydrolysis.</text>
</comment>
<comment type="similarity">
    <text evidence="1">Belongs to the adenylate kinase family.</text>
</comment>
<keyword id="KW-0067">ATP-binding</keyword>
<keyword id="KW-0963">Cytoplasm</keyword>
<keyword id="KW-0418">Kinase</keyword>
<keyword id="KW-0545">Nucleotide biosynthesis</keyword>
<keyword id="KW-0547">Nucleotide-binding</keyword>
<keyword id="KW-0808">Transferase</keyword>
<reference key="1">
    <citation type="journal article" date="2007" name="J. Bacteriol.">
        <title>Complete genome sequence of Haemophilus somnus (Histophilus somni) strain 129Pt and comparison to Haemophilus ducreyi 35000HP and Haemophilus influenzae Rd.</title>
        <authorList>
            <person name="Challacombe J.F."/>
            <person name="Duncan A.J."/>
            <person name="Brettin T.S."/>
            <person name="Bruce D."/>
            <person name="Chertkov O."/>
            <person name="Detter J.C."/>
            <person name="Han C.S."/>
            <person name="Misra M."/>
            <person name="Richardson P."/>
            <person name="Tapia R."/>
            <person name="Thayer N."/>
            <person name="Xie G."/>
            <person name="Inzana T.J."/>
        </authorList>
    </citation>
    <scope>NUCLEOTIDE SEQUENCE [LARGE SCALE GENOMIC DNA]</scope>
    <source>
        <strain>129Pt</strain>
    </source>
</reference>
<gene>
    <name evidence="1" type="primary">adk</name>
    <name type="ordered locus">HS_0648</name>
</gene>